<evidence type="ECO:0000250" key="1"/>
<evidence type="ECO:0000255" key="2">
    <source>
        <dbReference type="HAMAP-Rule" id="MF_03125"/>
    </source>
</evidence>
<evidence type="ECO:0000312" key="3">
    <source>
        <dbReference type="Proteomes" id="UP000008524"/>
    </source>
</evidence>
<name>PURA_TRYB2</name>
<reference key="1">
    <citation type="journal article" date="2005" name="Science">
        <title>The genome of the African trypanosome Trypanosoma brucei.</title>
        <authorList>
            <person name="Berriman M."/>
            <person name="Ghedin E."/>
            <person name="Hertz-Fowler C."/>
            <person name="Blandin G."/>
            <person name="Renauld H."/>
            <person name="Bartholomeu D.C."/>
            <person name="Lennard N.J."/>
            <person name="Caler E."/>
            <person name="Hamlin N.E."/>
            <person name="Haas B."/>
            <person name="Bohme U."/>
            <person name="Hannick L."/>
            <person name="Aslett M.A."/>
            <person name="Shallom J."/>
            <person name="Marcello L."/>
            <person name="Hou L."/>
            <person name="Wickstead B."/>
            <person name="Alsmark U.C.M."/>
            <person name="Arrowsmith C."/>
            <person name="Atkin R.J."/>
            <person name="Barron A.J."/>
            <person name="Bringaud F."/>
            <person name="Brooks K."/>
            <person name="Carrington M."/>
            <person name="Cherevach I."/>
            <person name="Chillingworth T.J."/>
            <person name="Churcher C."/>
            <person name="Clark L.N."/>
            <person name="Corton C.H."/>
            <person name="Cronin A."/>
            <person name="Davies R.M."/>
            <person name="Doggett J."/>
            <person name="Djikeng A."/>
            <person name="Feldblyum T."/>
            <person name="Field M.C."/>
            <person name="Fraser A."/>
            <person name="Goodhead I."/>
            <person name="Hance Z."/>
            <person name="Harper D."/>
            <person name="Harris B.R."/>
            <person name="Hauser H."/>
            <person name="Hostetler J."/>
            <person name="Ivens A."/>
            <person name="Jagels K."/>
            <person name="Johnson D."/>
            <person name="Johnson J."/>
            <person name="Jones K."/>
            <person name="Kerhornou A.X."/>
            <person name="Koo H."/>
            <person name="Larke N."/>
            <person name="Landfear S."/>
            <person name="Larkin C."/>
            <person name="Leech V."/>
            <person name="Line A."/>
            <person name="Lord A."/>
            <person name="Macleod A."/>
            <person name="Mooney P.J."/>
            <person name="Moule S."/>
            <person name="Martin D.M."/>
            <person name="Morgan G.W."/>
            <person name="Mungall K."/>
            <person name="Norbertczak H."/>
            <person name="Ormond D."/>
            <person name="Pai G."/>
            <person name="Peacock C.S."/>
            <person name="Peterson J."/>
            <person name="Quail M.A."/>
            <person name="Rabbinowitsch E."/>
            <person name="Rajandream M.A."/>
            <person name="Reitter C."/>
            <person name="Salzberg S.L."/>
            <person name="Sanders M."/>
            <person name="Schobel S."/>
            <person name="Sharp S."/>
            <person name="Simmonds M."/>
            <person name="Simpson A.J."/>
            <person name="Tallon L."/>
            <person name="Turner C.M."/>
            <person name="Tait A."/>
            <person name="Tivey A.R."/>
            <person name="Van Aken S."/>
            <person name="Walker D."/>
            <person name="Wanless D."/>
            <person name="Wang S."/>
            <person name="White B."/>
            <person name="White O."/>
            <person name="Whitehead S."/>
            <person name="Woodward J."/>
            <person name="Wortman J."/>
            <person name="Adams M.D."/>
            <person name="Embley T.M."/>
            <person name="Gull K."/>
            <person name="Ullu E."/>
            <person name="Barry J.D."/>
            <person name="Fairlamb A.H."/>
            <person name="Opperdoes F."/>
            <person name="Barrell B.G."/>
            <person name="Donelson J.E."/>
            <person name="Hall N."/>
            <person name="Fraser C.M."/>
            <person name="Melville S.E."/>
            <person name="El-Sayed N.M.A."/>
        </authorList>
    </citation>
    <scope>NUCLEOTIDE SEQUENCE [LARGE SCALE GENOMIC DNA]</scope>
    <source>
        <strain evidence="3">927/4 GUTat10.1</strain>
    </source>
</reference>
<protein>
    <recommendedName>
        <fullName evidence="2">Adenylosuccinate synthetase</fullName>
        <shortName evidence="2">AMPSase</shortName>
        <shortName evidence="2">AdSS</shortName>
        <ecNumber evidence="2">6.3.4.4</ecNumber>
    </recommendedName>
    <alternativeName>
        <fullName evidence="2">IMP--aspartate ligase</fullName>
    </alternativeName>
</protein>
<comment type="function">
    <text evidence="1">Plays an important role in the salvage pathway for purine nucleotide biosynthesis. Catalyzes the first committed step in the biosynthesis of AMP from IMP (By similarity).</text>
</comment>
<comment type="catalytic activity">
    <reaction evidence="2">
        <text>IMP + L-aspartate + GTP = N(6)-(1,2-dicarboxyethyl)-AMP + GDP + phosphate + 2 H(+)</text>
        <dbReference type="Rhea" id="RHEA:15753"/>
        <dbReference type="ChEBI" id="CHEBI:15378"/>
        <dbReference type="ChEBI" id="CHEBI:29991"/>
        <dbReference type="ChEBI" id="CHEBI:37565"/>
        <dbReference type="ChEBI" id="CHEBI:43474"/>
        <dbReference type="ChEBI" id="CHEBI:57567"/>
        <dbReference type="ChEBI" id="CHEBI:58053"/>
        <dbReference type="ChEBI" id="CHEBI:58189"/>
        <dbReference type="EC" id="6.3.4.4"/>
    </reaction>
</comment>
<comment type="cofactor">
    <cofactor evidence="2">
        <name>Mg(2+)</name>
        <dbReference type="ChEBI" id="CHEBI:18420"/>
    </cofactor>
    <text evidence="2">Binds 1 Mg(2+) ion per subunit.</text>
</comment>
<comment type="pathway">
    <text evidence="2">Purine metabolism; AMP biosynthesis via de novo pathway; AMP from IMP: step 1/2.</text>
</comment>
<comment type="subunit">
    <text evidence="2">Homodimer.</text>
</comment>
<comment type="subcellular location">
    <subcellularLocation>
        <location evidence="2">Cytoplasm</location>
    </subcellularLocation>
</comment>
<comment type="miscellaneous">
    <text>Parasitic protozoa lack the de novo purine biosynthesis pathway and rely exclusively on the salvage pathway for their purine nucleotide requirements.</text>
</comment>
<comment type="similarity">
    <text evidence="2">Belongs to the adenylosuccinate synthetase family.</text>
</comment>
<accession>Q386E7</accession>
<sequence>MAAAPSATAPKHNYTLGTNASQLELYKYLKTVPPIPELRQAVTIKKYEEASVDDTLYPLIDEHQIIMVVGAFFGDEGKGKTVDAVARHPACTCVARVNSGENAGHTVFDDIGRKYVFNLAPSSLLTPNTRNYVSSECVMDPISFMEREIGQFIKSNMPYKDKLFVGNVFVVTPYHKLLDLLGSAPNSSTLKGMSPIHASKVTKRGIRLDHIFNDEGVLRARLAKDMDTYYGLLKVKGLTDKDVVRRCQEENADGVERVPGYVVDFARAENKIDYLVKLYTERVKNNKDFPRRCDVTHELRAALARGEKLLLEGPQSYWLSNAREKFWESTTSADTTAGGLLASAQFNFQRYKVLVINVHKAPGSSRVGIGANPSSFVPQDYYSAQDIKTLEALPKGGCVDFDKIQNFFYTKAFNTESKTFNGIYEPLEYEDATGKYNIGVAMSIASARHHGECGAVTKKPRVCGFFDCVLHFEVNAVQGPYLSISAVDRGDDYDRIGITIAYVYYDVGNKMVDANGRVYKNGDIIKAGDPVPCEMALYHCYPIVKVINGWKGAPIAASKRRPNEPLPKGVCEFIANVEFFTGAKVISIGNGPRGSDIIYLKQ</sequence>
<keyword id="KW-0963">Cytoplasm</keyword>
<keyword id="KW-0342">GTP-binding</keyword>
<keyword id="KW-0436">Ligase</keyword>
<keyword id="KW-0460">Magnesium</keyword>
<keyword id="KW-0479">Metal-binding</keyword>
<keyword id="KW-0547">Nucleotide-binding</keyword>
<keyword id="KW-0658">Purine biosynthesis</keyword>
<keyword id="KW-1185">Reference proteome</keyword>
<feature type="chain" id="PRO_0000399305" description="Adenylosuccinate synthetase">
    <location>
        <begin position="1"/>
        <end position="602"/>
    </location>
</feature>
<feature type="active site" description="Proton acceptor" evidence="2">
    <location>
        <position position="75"/>
    </location>
</feature>
<feature type="active site" description="Proton donor" evidence="2">
    <location>
        <position position="105"/>
    </location>
</feature>
<feature type="binding site" evidence="2">
    <location>
        <begin position="74"/>
        <end position="80"/>
    </location>
    <ligand>
        <name>GTP</name>
        <dbReference type="ChEBI" id="CHEBI:37565"/>
    </ligand>
</feature>
<feature type="binding site" description="in other chain" evidence="2">
    <location>
        <begin position="75"/>
        <end position="78"/>
    </location>
    <ligand>
        <name>IMP</name>
        <dbReference type="ChEBI" id="CHEBI:58053"/>
        <note>ligand shared between dimeric partners</note>
    </ligand>
</feature>
<feature type="binding site" evidence="2">
    <location>
        <position position="75"/>
    </location>
    <ligand>
        <name>Mg(2+)</name>
        <dbReference type="ChEBI" id="CHEBI:18420"/>
    </ligand>
</feature>
<feature type="binding site" description="in other chain" evidence="2">
    <location>
        <begin position="102"/>
        <end position="105"/>
    </location>
    <ligand>
        <name>IMP</name>
        <dbReference type="ChEBI" id="CHEBI:58053"/>
        <note>ligand shared between dimeric partners</note>
    </ligand>
</feature>
<feature type="binding site" evidence="2">
    <location>
        <begin position="104"/>
        <end position="106"/>
    </location>
    <ligand>
        <name>GTP</name>
        <dbReference type="ChEBI" id="CHEBI:37565"/>
    </ligand>
</feature>
<feature type="binding site" evidence="2">
    <location>
        <position position="104"/>
    </location>
    <ligand>
        <name>Mg(2+)</name>
        <dbReference type="ChEBI" id="CHEBI:18420"/>
    </ligand>
</feature>
<feature type="binding site" description="in other chain" evidence="2">
    <location>
        <position position="189"/>
    </location>
    <ligand>
        <name>IMP</name>
        <dbReference type="ChEBI" id="CHEBI:58053"/>
        <note>ligand shared between dimeric partners</note>
    </ligand>
</feature>
<feature type="binding site" evidence="2">
    <location>
        <position position="203"/>
    </location>
    <ligand>
        <name>IMP</name>
        <dbReference type="ChEBI" id="CHEBI:58053"/>
        <note>ligand shared between dimeric partners</note>
    </ligand>
</feature>
<feature type="binding site" description="in other chain" evidence="2">
    <location>
        <position position="315"/>
    </location>
    <ligand>
        <name>IMP</name>
        <dbReference type="ChEBI" id="CHEBI:58053"/>
        <note>ligand shared between dimeric partners</note>
    </ligand>
</feature>
<feature type="binding site" description="in other chain" evidence="2">
    <location>
        <position position="331"/>
    </location>
    <ligand>
        <name>IMP</name>
        <dbReference type="ChEBI" id="CHEBI:58053"/>
        <note>ligand shared between dimeric partners</note>
    </ligand>
</feature>
<feature type="binding site" evidence="2">
    <location>
        <begin position="455"/>
        <end position="461"/>
    </location>
    <ligand>
        <name>substrate</name>
    </ligand>
</feature>
<feature type="binding site" description="in other chain" evidence="2">
    <location>
        <position position="459"/>
    </location>
    <ligand>
        <name>IMP</name>
        <dbReference type="ChEBI" id="CHEBI:58053"/>
        <note>ligand shared between dimeric partners</note>
    </ligand>
</feature>
<feature type="binding site" evidence="2">
    <location>
        <position position="461"/>
    </location>
    <ligand>
        <name>GTP</name>
        <dbReference type="ChEBI" id="CHEBI:37565"/>
    </ligand>
</feature>
<feature type="binding site" evidence="2">
    <location>
        <begin position="589"/>
        <end position="591"/>
    </location>
    <ligand>
        <name>GTP</name>
        <dbReference type="ChEBI" id="CHEBI:37565"/>
    </ligand>
</feature>
<proteinExistence type="inferred from homology"/>
<dbReference type="EC" id="6.3.4.4" evidence="2"/>
<dbReference type="EMBL" id="CH464491">
    <property type="protein sequence ID" value="EAN79334.1"/>
    <property type="molecule type" value="Genomic_DNA"/>
</dbReference>
<dbReference type="RefSeq" id="XP_828446.1">
    <property type="nucleotide sequence ID" value="XM_823353.1"/>
</dbReference>
<dbReference type="SMR" id="Q386E7"/>
<dbReference type="FunCoup" id="Q386E7">
    <property type="interactions" value="363"/>
</dbReference>
<dbReference type="STRING" id="185431.Q386E7"/>
<dbReference type="PaxDb" id="5691-EAN79334"/>
<dbReference type="GeneID" id="3665000"/>
<dbReference type="KEGG" id="tbr:Tb11.02.1120"/>
<dbReference type="VEuPathDB" id="TriTrypDB:Tb11.v5.0435"/>
<dbReference type="VEuPathDB" id="TriTrypDB:Tb927.11.3650"/>
<dbReference type="eggNOG" id="KOG1355">
    <property type="taxonomic scope" value="Eukaryota"/>
</dbReference>
<dbReference type="InParanoid" id="Q386E7"/>
<dbReference type="OrthoDB" id="10265645at2759"/>
<dbReference type="UniPathway" id="UPA00075">
    <property type="reaction ID" value="UER00335"/>
</dbReference>
<dbReference type="Proteomes" id="UP000008524">
    <property type="component" value="Chromosome 11 Scaffold 1"/>
</dbReference>
<dbReference type="GO" id="GO:0097014">
    <property type="term" value="C:ciliary plasm"/>
    <property type="evidence" value="ECO:0000314"/>
    <property type="project" value="GeneDB"/>
</dbReference>
<dbReference type="GO" id="GO:0005737">
    <property type="term" value="C:cytoplasm"/>
    <property type="evidence" value="ECO:0000314"/>
    <property type="project" value="GeneDB"/>
</dbReference>
<dbReference type="GO" id="GO:0020015">
    <property type="term" value="C:glycosome"/>
    <property type="evidence" value="ECO:0000314"/>
    <property type="project" value="GeneDB"/>
</dbReference>
<dbReference type="GO" id="GO:0004019">
    <property type="term" value="F:adenylosuccinate synthase activity"/>
    <property type="evidence" value="ECO:0000255"/>
    <property type="project" value="GeneDB"/>
</dbReference>
<dbReference type="GO" id="GO:0005525">
    <property type="term" value="F:GTP binding"/>
    <property type="evidence" value="ECO:0007669"/>
    <property type="project" value="UniProtKB-UniRule"/>
</dbReference>
<dbReference type="GO" id="GO:0000287">
    <property type="term" value="F:magnesium ion binding"/>
    <property type="evidence" value="ECO:0007669"/>
    <property type="project" value="UniProtKB-UniRule"/>
</dbReference>
<dbReference type="GO" id="GO:0044208">
    <property type="term" value="P:'de novo' AMP biosynthetic process"/>
    <property type="evidence" value="ECO:0000318"/>
    <property type="project" value="GO_Central"/>
</dbReference>
<dbReference type="GO" id="GO:0046040">
    <property type="term" value="P:IMP metabolic process"/>
    <property type="evidence" value="ECO:0000318"/>
    <property type="project" value="GO_Central"/>
</dbReference>
<dbReference type="GO" id="GO:0010608">
    <property type="term" value="P:post-transcriptional regulation of gene expression"/>
    <property type="evidence" value="ECO:0000314"/>
    <property type="project" value="GeneDB"/>
</dbReference>
<dbReference type="GO" id="GO:0006164">
    <property type="term" value="P:purine nucleotide biosynthetic process"/>
    <property type="evidence" value="ECO:0000255"/>
    <property type="project" value="GeneDB"/>
</dbReference>
<dbReference type="FunFam" id="3.90.170.10:FF:000003">
    <property type="entry name" value="Adenylosuccinate synthetase"/>
    <property type="match status" value="1"/>
</dbReference>
<dbReference type="Gene3D" id="3.40.440.10">
    <property type="entry name" value="Adenylosuccinate Synthetase, subunit A, domain 1"/>
    <property type="match status" value="1"/>
</dbReference>
<dbReference type="Gene3D" id="1.10.300.10">
    <property type="entry name" value="Adenylosuccinate Synthetase, subunit A, domain 2"/>
    <property type="match status" value="1"/>
</dbReference>
<dbReference type="Gene3D" id="3.90.170.10">
    <property type="entry name" value="Adenylosuccinate Synthetase, subunit A, domain 3"/>
    <property type="match status" value="1"/>
</dbReference>
<dbReference type="HAMAP" id="MF_00011">
    <property type="entry name" value="Adenylosucc_synth"/>
    <property type="match status" value="1"/>
</dbReference>
<dbReference type="InterPro" id="IPR018220">
    <property type="entry name" value="Adenylosuccin_syn_GTP-bd"/>
</dbReference>
<dbReference type="InterPro" id="IPR042109">
    <property type="entry name" value="Adenylosuccinate_synth_dom1"/>
</dbReference>
<dbReference type="InterPro" id="IPR042110">
    <property type="entry name" value="Adenylosuccinate_synth_dom2"/>
</dbReference>
<dbReference type="InterPro" id="IPR042111">
    <property type="entry name" value="Adenylosuccinate_synth_dom3"/>
</dbReference>
<dbReference type="InterPro" id="IPR001114">
    <property type="entry name" value="Adenylosuccinate_synthetase"/>
</dbReference>
<dbReference type="InterPro" id="IPR027417">
    <property type="entry name" value="P-loop_NTPase"/>
</dbReference>
<dbReference type="PANTHER" id="PTHR11846">
    <property type="entry name" value="ADENYLOSUCCINATE SYNTHETASE"/>
    <property type="match status" value="1"/>
</dbReference>
<dbReference type="PANTHER" id="PTHR11846:SF0">
    <property type="entry name" value="ADENYLOSUCCINATE SYNTHETASE"/>
    <property type="match status" value="1"/>
</dbReference>
<dbReference type="Pfam" id="PF00709">
    <property type="entry name" value="Adenylsucc_synt"/>
    <property type="match status" value="1"/>
</dbReference>
<dbReference type="SMART" id="SM00788">
    <property type="entry name" value="Adenylsucc_synt"/>
    <property type="match status" value="1"/>
</dbReference>
<dbReference type="SUPFAM" id="SSF52540">
    <property type="entry name" value="P-loop containing nucleoside triphosphate hydrolases"/>
    <property type="match status" value="1"/>
</dbReference>
<dbReference type="PROSITE" id="PS01266">
    <property type="entry name" value="ADENYLOSUCCIN_SYN_1"/>
    <property type="match status" value="1"/>
</dbReference>
<gene>
    <name type="ORF">Tb11.02.1120</name>
</gene>
<organism>
    <name type="scientific">Trypanosoma brucei brucei (strain 927/4 GUTat10.1)</name>
    <dbReference type="NCBI Taxonomy" id="185431"/>
    <lineage>
        <taxon>Eukaryota</taxon>
        <taxon>Discoba</taxon>
        <taxon>Euglenozoa</taxon>
        <taxon>Kinetoplastea</taxon>
        <taxon>Metakinetoplastina</taxon>
        <taxon>Trypanosomatida</taxon>
        <taxon>Trypanosomatidae</taxon>
        <taxon>Trypanosoma</taxon>
    </lineage>
</organism>